<gene>
    <name evidence="1" type="primary">tatB</name>
    <name type="ordered locus">Sden_0457</name>
</gene>
<proteinExistence type="inferred from homology"/>
<feature type="chain" id="PRO_0000301233" description="Sec-independent protein translocase protein TatB">
    <location>
        <begin position="1"/>
        <end position="132"/>
    </location>
</feature>
<feature type="transmembrane region" description="Helical" evidence="1">
    <location>
        <begin position="2"/>
        <end position="22"/>
    </location>
</feature>
<feature type="region of interest" description="Disordered" evidence="2">
    <location>
        <begin position="86"/>
        <end position="132"/>
    </location>
</feature>
<feature type="compositionally biased region" description="Polar residues" evidence="2">
    <location>
        <begin position="86"/>
        <end position="95"/>
    </location>
</feature>
<feature type="compositionally biased region" description="Polar residues" evidence="2">
    <location>
        <begin position="116"/>
        <end position="132"/>
    </location>
</feature>
<dbReference type="EMBL" id="CP000302">
    <property type="protein sequence ID" value="ABE53749.1"/>
    <property type="molecule type" value="Genomic_DNA"/>
</dbReference>
<dbReference type="RefSeq" id="WP_011494915.1">
    <property type="nucleotide sequence ID" value="NC_007954.1"/>
</dbReference>
<dbReference type="SMR" id="Q12S27"/>
<dbReference type="STRING" id="318161.Sden_0457"/>
<dbReference type="KEGG" id="sdn:Sden_0457"/>
<dbReference type="eggNOG" id="COG1826">
    <property type="taxonomic scope" value="Bacteria"/>
</dbReference>
<dbReference type="HOGENOM" id="CLU_086034_1_1_6"/>
<dbReference type="OrthoDB" id="9816005at2"/>
<dbReference type="Proteomes" id="UP000001982">
    <property type="component" value="Chromosome"/>
</dbReference>
<dbReference type="GO" id="GO:0033281">
    <property type="term" value="C:TAT protein transport complex"/>
    <property type="evidence" value="ECO:0007669"/>
    <property type="project" value="UniProtKB-UniRule"/>
</dbReference>
<dbReference type="GO" id="GO:0008320">
    <property type="term" value="F:protein transmembrane transporter activity"/>
    <property type="evidence" value="ECO:0007669"/>
    <property type="project" value="UniProtKB-UniRule"/>
</dbReference>
<dbReference type="GO" id="GO:0043953">
    <property type="term" value="P:protein transport by the Tat complex"/>
    <property type="evidence" value="ECO:0007669"/>
    <property type="project" value="UniProtKB-UniRule"/>
</dbReference>
<dbReference type="Gene3D" id="1.20.5.3310">
    <property type="match status" value="1"/>
</dbReference>
<dbReference type="HAMAP" id="MF_00237">
    <property type="entry name" value="TatB"/>
    <property type="match status" value="1"/>
</dbReference>
<dbReference type="InterPro" id="IPR003369">
    <property type="entry name" value="TatA/B/E"/>
</dbReference>
<dbReference type="InterPro" id="IPR018448">
    <property type="entry name" value="TatB"/>
</dbReference>
<dbReference type="NCBIfam" id="TIGR01410">
    <property type="entry name" value="tatB"/>
    <property type="match status" value="1"/>
</dbReference>
<dbReference type="PANTHER" id="PTHR33162">
    <property type="entry name" value="SEC-INDEPENDENT PROTEIN TRANSLOCASE PROTEIN TATA, CHLOROPLASTIC"/>
    <property type="match status" value="1"/>
</dbReference>
<dbReference type="PANTHER" id="PTHR33162:SF1">
    <property type="entry name" value="SEC-INDEPENDENT PROTEIN TRANSLOCASE PROTEIN TATA, CHLOROPLASTIC"/>
    <property type="match status" value="1"/>
</dbReference>
<dbReference type="Pfam" id="PF02416">
    <property type="entry name" value="TatA_B_E"/>
    <property type="match status" value="1"/>
</dbReference>
<dbReference type="PRINTS" id="PR01506">
    <property type="entry name" value="TATBPROTEIN"/>
</dbReference>
<evidence type="ECO:0000255" key="1">
    <source>
        <dbReference type="HAMAP-Rule" id="MF_00237"/>
    </source>
</evidence>
<evidence type="ECO:0000256" key="2">
    <source>
        <dbReference type="SAM" id="MobiDB-lite"/>
    </source>
</evidence>
<comment type="function">
    <text evidence="1">Part of the twin-arginine translocation (Tat) system that transports large folded proteins containing a characteristic twin-arginine motif in their signal peptide across membranes. Together with TatC, TatB is part of a receptor directly interacting with Tat signal peptides. TatB may form an oligomeric binding site that transiently accommodates folded Tat precursor proteins before their translocation.</text>
</comment>
<comment type="subunit">
    <text evidence="1">The Tat system comprises two distinct complexes: a TatABC complex, containing multiple copies of TatA, TatB and TatC subunits, and a separate TatA complex, containing only TatA subunits. Substrates initially bind to the TatABC complex, which probably triggers association of the separate TatA complex to form the active translocon.</text>
</comment>
<comment type="subcellular location">
    <subcellularLocation>
        <location evidence="1">Cell inner membrane</location>
        <topology evidence="1">Single-pass membrane protein</topology>
    </subcellularLocation>
</comment>
<comment type="similarity">
    <text evidence="1">Belongs to the TatB family.</text>
</comment>
<sequence length="132" mass="14496">MFDGIGFMELLLIGILGLVVLGPERLPVAVRSVTGWIRALKRMANSVKDELEQELKIEQLHADLKKAESKGLANLSPELQESIDQLKQAAQSVNRPYQLDESNEQEPKIAPPQANIAETPTQSGDTHSKNNG</sequence>
<accession>Q12S27</accession>
<organism>
    <name type="scientific">Shewanella denitrificans (strain OS217 / ATCC BAA-1090 / DSM 15013)</name>
    <dbReference type="NCBI Taxonomy" id="318161"/>
    <lineage>
        <taxon>Bacteria</taxon>
        <taxon>Pseudomonadati</taxon>
        <taxon>Pseudomonadota</taxon>
        <taxon>Gammaproteobacteria</taxon>
        <taxon>Alteromonadales</taxon>
        <taxon>Shewanellaceae</taxon>
        <taxon>Shewanella</taxon>
    </lineage>
</organism>
<keyword id="KW-0997">Cell inner membrane</keyword>
<keyword id="KW-1003">Cell membrane</keyword>
<keyword id="KW-0472">Membrane</keyword>
<keyword id="KW-0653">Protein transport</keyword>
<keyword id="KW-1185">Reference proteome</keyword>
<keyword id="KW-0811">Translocation</keyword>
<keyword id="KW-0812">Transmembrane</keyword>
<keyword id="KW-1133">Transmembrane helix</keyword>
<keyword id="KW-0813">Transport</keyword>
<name>TATB_SHEDO</name>
<protein>
    <recommendedName>
        <fullName evidence="1">Sec-independent protein translocase protein TatB</fullName>
    </recommendedName>
</protein>
<reference key="1">
    <citation type="submission" date="2006-03" db="EMBL/GenBank/DDBJ databases">
        <title>Complete sequence of Shewanella denitrificans OS217.</title>
        <authorList>
            <consortium name="US DOE Joint Genome Institute"/>
            <person name="Copeland A."/>
            <person name="Lucas S."/>
            <person name="Lapidus A."/>
            <person name="Barry K."/>
            <person name="Detter J.C."/>
            <person name="Glavina del Rio T."/>
            <person name="Hammon N."/>
            <person name="Israni S."/>
            <person name="Dalin E."/>
            <person name="Tice H."/>
            <person name="Pitluck S."/>
            <person name="Brettin T."/>
            <person name="Bruce D."/>
            <person name="Han C."/>
            <person name="Tapia R."/>
            <person name="Gilna P."/>
            <person name="Kiss H."/>
            <person name="Schmutz J."/>
            <person name="Larimer F."/>
            <person name="Land M."/>
            <person name="Hauser L."/>
            <person name="Kyrpides N."/>
            <person name="Lykidis A."/>
            <person name="Richardson P."/>
        </authorList>
    </citation>
    <scope>NUCLEOTIDE SEQUENCE [LARGE SCALE GENOMIC DNA]</scope>
    <source>
        <strain>OS217 / ATCC BAA-1090 / DSM 15013</strain>
    </source>
</reference>